<feature type="chain" id="PRO_0000071746" description="V-type proton ATPase 16 kDa proteolipid subunit c">
    <location>
        <begin position="1"/>
        <end position="155"/>
    </location>
</feature>
<feature type="topological domain" description="Lumenal" evidence="5">
    <location>
        <begin position="1"/>
        <end position="10"/>
    </location>
</feature>
<feature type="transmembrane region" description="Helical" evidence="5">
    <location>
        <begin position="11"/>
        <end position="33"/>
    </location>
</feature>
<feature type="topological domain" description="Cytoplasmic" evidence="5">
    <location>
        <begin position="34"/>
        <end position="55"/>
    </location>
</feature>
<feature type="transmembrane region" description="Helical" evidence="5">
    <location>
        <begin position="56"/>
        <end position="76"/>
    </location>
</feature>
<feature type="topological domain" description="Lumenal" evidence="5">
    <location>
        <begin position="77"/>
        <end position="92"/>
    </location>
</feature>
<feature type="transmembrane region" description="Helical" evidence="5">
    <location>
        <begin position="93"/>
        <end position="114"/>
    </location>
</feature>
<feature type="topological domain" description="Cytoplasmic" evidence="5">
    <location>
        <begin position="115"/>
        <end position="131"/>
    </location>
</feature>
<feature type="transmembrane region" description="Helical" evidence="5">
    <location>
        <begin position="132"/>
        <end position="152"/>
    </location>
</feature>
<feature type="topological domain" description="Lumenal" evidence="5">
    <location>
        <begin position="153"/>
        <end position="155"/>
    </location>
</feature>
<feature type="site" description="Essential for proton translocation" evidence="3">
    <location>
        <position position="139"/>
    </location>
</feature>
<organism>
    <name type="scientific">Ovis aries</name>
    <name type="common">Sheep</name>
    <dbReference type="NCBI Taxonomy" id="9940"/>
    <lineage>
        <taxon>Eukaryota</taxon>
        <taxon>Metazoa</taxon>
        <taxon>Chordata</taxon>
        <taxon>Craniata</taxon>
        <taxon>Vertebrata</taxon>
        <taxon>Euteleostomi</taxon>
        <taxon>Mammalia</taxon>
        <taxon>Eutheria</taxon>
        <taxon>Laurasiatheria</taxon>
        <taxon>Artiodactyla</taxon>
        <taxon>Ruminantia</taxon>
        <taxon>Pecora</taxon>
        <taxon>Bovidae</taxon>
        <taxon>Caprinae</taxon>
        <taxon>Ovis</taxon>
    </lineage>
</organism>
<dbReference type="EMBL" id="AF027705">
    <property type="protein sequence ID" value="AAB84040.1"/>
    <property type="molecule type" value="mRNA"/>
</dbReference>
<dbReference type="RefSeq" id="NP_001009195.1">
    <property type="nucleotide sequence ID" value="NM_001009195.1"/>
</dbReference>
<dbReference type="SMR" id="O18882"/>
<dbReference type="STRING" id="9940.ENSOARP00000011352"/>
<dbReference type="PaxDb" id="9940-ENSOARP00000011352"/>
<dbReference type="Ensembl" id="ENSOART00215060506">
    <property type="protein sequence ID" value="ENSOARP00215032106"/>
    <property type="gene ID" value="ENSOARG00215036038"/>
</dbReference>
<dbReference type="Ensembl" id="ENSOART00220042152">
    <property type="protein sequence ID" value="ENSOARP00220022644"/>
    <property type="gene ID" value="ENSOARG00220025290"/>
</dbReference>
<dbReference type="Ensembl" id="ENSOART00225027235">
    <property type="protein sequence ID" value="ENSOARP00225013086"/>
    <property type="gene ID" value="ENSOARG00225016695"/>
</dbReference>
<dbReference type="GeneID" id="443003"/>
<dbReference type="KEGG" id="oas:443003"/>
<dbReference type="CTD" id="527"/>
<dbReference type="eggNOG" id="KOG0232">
    <property type="taxonomic scope" value="Eukaryota"/>
</dbReference>
<dbReference type="OrthoDB" id="1744869at2759"/>
<dbReference type="Proteomes" id="UP000002356">
    <property type="component" value="Unplaced"/>
</dbReference>
<dbReference type="GO" id="GO:0030665">
    <property type="term" value="C:clathrin-coated vesicle membrane"/>
    <property type="evidence" value="ECO:0007669"/>
    <property type="project" value="UniProtKB-SubCell"/>
</dbReference>
<dbReference type="GO" id="GO:0030672">
    <property type="term" value="C:synaptic vesicle membrane"/>
    <property type="evidence" value="ECO:0007669"/>
    <property type="project" value="UniProtKB-SubCell"/>
</dbReference>
<dbReference type="GO" id="GO:0000220">
    <property type="term" value="C:vacuolar proton-transporting V-type ATPase, V0 domain"/>
    <property type="evidence" value="ECO:0000250"/>
    <property type="project" value="UniProtKB"/>
</dbReference>
<dbReference type="GO" id="GO:0046961">
    <property type="term" value="F:proton-transporting ATPase activity, rotational mechanism"/>
    <property type="evidence" value="ECO:0007669"/>
    <property type="project" value="InterPro"/>
</dbReference>
<dbReference type="CDD" id="cd18175">
    <property type="entry name" value="ATP-synt_Vo_c_ATP6C_rpt1"/>
    <property type="match status" value="1"/>
</dbReference>
<dbReference type="CDD" id="cd18176">
    <property type="entry name" value="ATP-synt_Vo_c_ATP6C_rpt2"/>
    <property type="match status" value="1"/>
</dbReference>
<dbReference type="FunFam" id="1.20.120.610:FF:000001">
    <property type="entry name" value="V-type proton ATPase proteolipid subunit"/>
    <property type="match status" value="1"/>
</dbReference>
<dbReference type="Gene3D" id="1.20.120.610">
    <property type="entry name" value="lithium bound rotor ring of v- atpase"/>
    <property type="match status" value="1"/>
</dbReference>
<dbReference type="InterPro" id="IPR002379">
    <property type="entry name" value="ATPase_proteolipid_c-like_dom"/>
</dbReference>
<dbReference type="InterPro" id="IPR000245">
    <property type="entry name" value="ATPase_proteolipid_csu"/>
</dbReference>
<dbReference type="InterPro" id="IPR011555">
    <property type="entry name" value="ATPase_proteolipid_su_C_euk"/>
</dbReference>
<dbReference type="InterPro" id="IPR035921">
    <property type="entry name" value="F/V-ATP_Csub_sf"/>
</dbReference>
<dbReference type="NCBIfam" id="TIGR01100">
    <property type="entry name" value="V_ATP_synt_C"/>
    <property type="match status" value="1"/>
</dbReference>
<dbReference type="PANTHER" id="PTHR10263">
    <property type="entry name" value="V-TYPE PROTON ATPASE PROTEOLIPID SUBUNIT"/>
    <property type="match status" value="1"/>
</dbReference>
<dbReference type="Pfam" id="PF00137">
    <property type="entry name" value="ATP-synt_C"/>
    <property type="match status" value="2"/>
</dbReference>
<dbReference type="PRINTS" id="PR00122">
    <property type="entry name" value="VACATPASE"/>
</dbReference>
<dbReference type="SUPFAM" id="SSF81333">
    <property type="entry name" value="F1F0 ATP synthase subunit C"/>
    <property type="match status" value="2"/>
</dbReference>
<reference key="1">
    <citation type="submission" date="1997-10" db="EMBL/GenBank/DDBJ databases">
        <title>Cloning of the ovine Vacuolar ATPase subunit c cDNA.</title>
        <authorList>
            <person name="Hamilton N.H.R."/>
            <person name="Damak S."/>
            <person name="Palmer D.N."/>
        </authorList>
    </citation>
    <scope>NUCLEOTIDE SEQUENCE [MRNA]</scope>
</reference>
<comment type="function">
    <text evidence="1 2">Proton-conducting pore forming subunit of the V0 complex of vacuolar(H+)-ATPase (V-ATPase), a multisubunit enzyme composed of a peripheral complex (V1) that hydrolyzes ATP and a membrane integral complex (V0) that translocates protons (By similarity). V-ATPase is responsible for acidifying and maintaining the pH of intracellular compartments and in some cell types, is targeted to the plasma membrane, where it is responsible for acidifying the extracellular environment (By similarity).</text>
</comment>
<comment type="subunit">
    <text evidence="2 4">V-ATPase is a heteromultimeric enzyme made up of two complexes: the ATP-hydrolytic V1 complex and the proton translocation V0 complex (By similarity). The V1 complex consists of three catalytic AB heterodimers that form a heterohexamer, three peripheral stalks each consisting of EG heterodimers, one central rotor including subunits D and F, and the regulatory subunits C and H (By similarity). The proton translocation complex V0 consists of the proton transport subunit a, a ring of proteolipid subunits c9c'', rotary subunit d, subunits e and f, and the accessory subunits ATP6AP1/Ac45 and ATP6AP2/PRR (By similarity). Interacts with the V0 complex V-ATPase subunit a4 ATP6V0A4 (By similarity). Interacts with LASS2 (By similarity). Interacts with RNF182; this interaction leads to ubiquitination and degradation via the proteasome pathway (By similarity).</text>
</comment>
<comment type="subcellular location">
    <subcellularLocation>
        <location evidence="3">Cytoplasmic vesicle</location>
        <location evidence="3">Clathrin-coated vesicle membrane</location>
        <topology evidence="5">Multi-pass membrane protein</topology>
    </subcellularLocation>
    <subcellularLocation>
        <location evidence="3">Cytoplasmic vesicle</location>
        <location evidence="3">Secretory vesicle</location>
        <location evidence="3">Synaptic vesicle membrane</location>
        <topology evidence="5">Multi-pass membrane protein</topology>
    </subcellularLocation>
</comment>
<comment type="PTM">
    <text evidence="2">Ubiquitinated by RNF182, leading to its degradation via the ubiquitin-proteasome pathway.</text>
</comment>
<comment type="similarity">
    <text evidence="6">Belongs to the V-ATPase proteolipid subunit family.</text>
</comment>
<proteinExistence type="evidence at transcript level"/>
<evidence type="ECO:0000250" key="1">
    <source>
        <dbReference type="UniProtKB" id="P23956"/>
    </source>
</evidence>
<evidence type="ECO:0000250" key="2">
    <source>
        <dbReference type="UniProtKB" id="P27449"/>
    </source>
</evidence>
<evidence type="ECO:0000250" key="3">
    <source>
        <dbReference type="UniProtKB" id="P63081"/>
    </source>
</evidence>
<evidence type="ECO:0000250" key="4">
    <source>
        <dbReference type="UniProtKB" id="P63082"/>
    </source>
</evidence>
<evidence type="ECO:0000255" key="5"/>
<evidence type="ECO:0000305" key="6"/>
<protein>
    <recommendedName>
        <fullName evidence="6">V-type proton ATPase 16 kDa proteolipid subunit c</fullName>
        <shortName evidence="6">V-ATPase 16 kDa proteolipid subunit c</shortName>
    </recommendedName>
    <alternativeName>
        <fullName evidence="6">Vacuolar proton pump 16 kDa proteolipid subunit c</fullName>
    </alternativeName>
</protein>
<sequence length="155" mass="15693">MSEAKSGPEYASFFAVMGASAAMVFSALGAAYGTAKSGTGIAAMSVMRPEMIMKSIIPVVMAGIIAIYGLVVAVLIANSLNDGISLYRSFLQLGAGLSVGLSGLAAGFAIGIVGDAGVRGTAQQPRLFVGMILILIFAEVLGLYGLIVALILSTK</sequence>
<accession>O18882</accession>
<gene>
    <name type="primary">ATP6V0C</name>
    <name type="synonym">ATP6C</name>
    <name type="synonym">ATP6L</name>
</gene>
<name>VATL_SHEEP</name>
<keyword id="KW-0968">Cytoplasmic vesicle</keyword>
<keyword id="KW-0375">Hydrogen ion transport</keyword>
<keyword id="KW-0406">Ion transport</keyword>
<keyword id="KW-0472">Membrane</keyword>
<keyword id="KW-1185">Reference proteome</keyword>
<keyword id="KW-0770">Synapse</keyword>
<keyword id="KW-0812">Transmembrane</keyword>
<keyword id="KW-1133">Transmembrane helix</keyword>
<keyword id="KW-0813">Transport</keyword>
<keyword id="KW-0832">Ubl conjugation</keyword>